<reference key="1">
    <citation type="submission" date="2007-11" db="EMBL/GenBank/DDBJ databases">
        <authorList>
            <consortium name="The Salmonella enterica serovar Arizonae Genome Sequencing Project"/>
            <person name="McClelland M."/>
            <person name="Sanderson E.K."/>
            <person name="Porwollik S."/>
            <person name="Spieth J."/>
            <person name="Clifton W.S."/>
            <person name="Fulton R."/>
            <person name="Chunyan W."/>
            <person name="Wollam A."/>
            <person name="Shah N."/>
            <person name="Pepin K."/>
            <person name="Bhonagiri V."/>
            <person name="Nash W."/>
            <person name="Johnson M."/>
            <person name="Thiruvilangam P."/>
            <person name="Wilson R."/>
        </authorList>
    </citation>
    <scope>NUCLEOTIDE SEQUENCE [LARGE SCALE GENOMIC DNA]</scope>
    <source>
        <strain>ATCC BAA-731 / CDC346-86 / RSK2980</strain>
    </source>
</reference>
<protein>
    <recommendedName>
        <fullName evidence="1">Pole-localizer protein TmaR</fullName>
    </recommendedName>
</protein>
<keyword id="KW-0175">Coiled coil</keyword>
<keyword id="KW-0963">Cytoplasm</keyword>
<keyword id="KW-1185">Reference proteome</keyword>
<sequence>METTKPSFQDVLEFVRLFRRKNKLQREIQDIEKKIRDNQKRVLLLDNLSDYIKPGMSVEAIQGIIASMKSDYEDRVDDYIIKNAEISKERRDISKKLKAMGEMKHADVKAE</sequence>
<name>TMAR_SALAR</name>
<feature type="chain" id="PRO_1000083059" description="Pole-localizer protein TmaR">
    <location>
        <begin position="1"/>
        <end position="111"/>
    </location>
</feature>
<feature type="coiled-coil region" evidence="1">
    <location>
        <begin position="14"/>
        <end position="41"/>
    </location>
</feature>
<proteinExistence type="inferred from homology"/>
<evidence type="ECO:0000255" key="1">
    <source>
        <dbReference type="HAMAP-Rule" id="MF_00683"/>
    </source>
</evidence>
<dbReference type="EMBL" id="CP000880">
    <property type="protein sequence ID" value="ABX20747.1"/>
    <property type="molecule type" value="Genomic_DNA"/>
</dbReference>
<dbReference type="SMR" id="A9MLN4"/>
<dbReference type="STRING" id="41514.SARI_00828"/>
<dbReference type="KEGG" id="ses:SARI_00828"/>
<dbReference type="HOGENOM" id="CLU_153146_0_0_6"/>
<dbReference type="Proteomes" id="UP000002084">
    <property type="component" value="Chromosome"/>
</dbReference>
<dbReference type="GO" id="GO:0005829">
    <property type="term" value="C:cytosol"/>
    <property type="evidence" value="ECO:0007669"/>
    <property type="project" value="TreeGrafter"/>
</dbReference>
<dbReference type="HAMAP" id="MF_00683">
    <property type="entry name" value="Pole_loc_TmaR"/>
    <property type="match status" value="1"/>
</dbReference>
<dbReference type="InterPro" id="IPR007458">
    <property type="entry name" value="DUF496"/>
</dbReference>
<dbReference type="InterPro" id="IPR053375">
    <property type="entry name" value="UPF0265"/>
</dbReference>
<dbReference type="NCBIfam" id="NF003844">
    <property type="entry name" value="PRK05423.1"/>
    <property type="match status" value="1"/>
</dbReference>
<dbReference type="NCBIfam" id="NF040881">
    <property type="entry name" value="PTS_reg_TmaR"/>
    <property type="match status" value="1"/>
</dbReference>
<dbReference type="PANTHER" id="PTHR39591">
    <property type="entry name" value="UPF0265 PROTEIN YEEX"/>
    <property type="match status" value="1"/>
</dbReference>
<dbReference type="PANTHER" id="PTHR39591:SF1">
    <property type="entry name" value="UPF0265 PROTEIN YEEX"/>
    <property type="match status" value="1"/>
</dbReference>
<dbReference type="Pfam" id="PF04363">
    <property type="entry name" value="DUF496"/>
    <property type="match status" value="1"/>
</dbReference>
<dbReference type="PIRSF" id="PIRSF028773">
    <property type="entry name" value="UCP028773"/>
    <property type="match status" value="1"/>
</dbReference>
<comment type="function">
    <text evidence="1">Pole-localizer protein involved in the regulation of several cellular processes.</text>
</comment>
<comment type="subcellular location">
    <subcellularLocation>
        <location evidence="1">Cytoplasm</location>
    </subcellularLocation>
    <text evidence="1">Forms clusters that localize mainly near one pole of the cell.</text>
</comment>
<comment type="similarity">
    <text evidence="1">Belongs to the pole-localizer TmaR family.</text>
</comment>
<gene>
    <name evidence="1" type="primary">tmaR</name>
    <name type="ordered locus">SARI_00828</name>
</gene>
<accession>A9MLN4</accession>
<organism>
    <name type="scientific">Salmonella arizonae (strain ATCC BAA-731 / CDC346-86 / RSK2980)</name>
    <dbReference type="NCBI Taxonomy" id="41514"/>
    <lineage>
        <taxon>Bacteria</taxon>
        <taxon>Pseudomonadati</taxon>
        <taxon>Pseudomonadota</taxon>
        <taxon>Gammaproteobacteria</taxon>
        <taxon>Enterobacterales</taxon>
        <taxon>Enterobacteriaceae</taxon>
        <taxon>Salmonella</taxon>
    </lineage>
</organism>